<accession>Q84SN3</accession>
<accession>B7EX96</accession>
<comment type="catalytic activity">
    <reaction>
        <text>L-seryl-[protein] + ATP = O-phospho-L-seryl-[protein] + ADP + H(+)</text>
        <dbReference type="Rhea" id="RHEA:17989"/>
        <dbReference type="Rhea" id="RHEA-COMP:9863"/>
        <dbReference type="Rhea" id="RHEA-COMP:11604"/>
        <dbReference type="ChEBI" id="CHEBI:15378"/>
        <dbReference type="ChEBI" id="CHEBI:29999"/>
        <dbReference type="ChEBI" id="CHEBI:30616"/>
        <dbReference type="ChEBI" id="CHEBI:83421"/>
        <dbReference type="ChEBI" id="CHEBI:456216"/>
        <dbReference type="EC" id="2.7.11.22"/>
    </reaction>
</comment>
<comment type="catalytic activity">
    <reaction>
        <text>L-threonyl-[protein] + ATP = O-phospho-L-threonyl-[protein] + ADP + H(+)</text>
        <dbReference type="Rhea" id="RHEA:46608"/>
        <dbReference type="Rhea" id="RHEA-COMP:11060"/>
        <dbReference type="Rhea" id="RHEA-COMP:11605"/>
        <dbReference type="ChEBI" id="CHEBI:15378"/>
        <dbReference type="ChEBI" id="CHEBI:30013"/>
        <dbReference type="ChEBI" id="CHEBI:30616"/>
        <dbReference type="ChEBI" id="CHEBI:61977"/>
        <dbReference type="ChEBI" id="CHEBI:456216"/>
        <dbReference type="EC" id="2.7.11.22"/>
    </reaction>
</comment>
<comment type="catalytic activity">
    <reaction>
        <text>[DNA-directed RNA polymerase] + ATP = phospho-[DNA-directed RNA polymerase] + ADP + H(+)</text>
        <dbReference type="Rhea" id="RHEA:10216"/>
        <dbReference type="Rhea" id="RHEA-COMP:11321"/>
        <dbReference type="Rhea" id="RHEA-COMP:11322"/>
        <dbReference type="ChEBI" id="CHEBI:15378"/>
        <dbReference type="ChEBI" id="CHEBI:30616"/>
        <dbReference type="ChEBI" id="CHEBI:43176"/>
        <dbReference type="ChEBI" id="CHEBI:68546"/>
        <dbReference type="ChEBI" id="CHEBI:456216"/>
        <dbReference type="EC" id="2.7.11.23"/>
    </reaction>
</comment>
<comment type="induction">
    <text evidence="4">Down-regulated by cytokinin.</text>
</comment>
<comment type="similarity">
    <text evidence="5">Belongs to the protein kinase superfamily. CMGC Ser/Thr protein kinase family. CDC2/CDKX subfamily.</text>
</comment>
<reference key="1">
    <citation type="journal article" date="2005" name="Genome Res.">
        <title>Sequence, annotation, and analysis of synteny between rice chromosome 3 and diverged grass species.</title>
        <authorList>
            <consortium name="The rice chromosome 3 sequencing consortium"/>
            <person name="Buell C.R."/>
            <person name="Yuan Q."/>
            <person name="Ouyang S."/>
            <person name="Liu J."/>
            <person name="Zhu W."/>
            <person name="Wang A."/>
            <person name="Maiti R."/>
            <person name="Haas B."/>
            <person name="Wortman J."/>
            <person name="Pertea M."/>
            <person name="Jones K.M."/>
            <person name="Kim M."/>
            <person name="Overton L."/>
            <person name="Tsitrin T."/>
            <person name="Fadrosh D."/>
            <person name="Bera J."/>
            <person name="Weaver B."/>
            <person name="Jin S."/>
            <person name="Johri S."/>
            <person name="Reardon M."/>
            <person name="Webb K."/>
            <person name="Hill J."/>
            <person name="Moffat K."/>
            <person name="Tallon L."/>
            <person name="Van Aken S."/>
            <person name="Lewis M."/>
            <person name="Utterback T."/>
            <person name="Feldblyum T."/>
            <person name="Zismann V."/>
            <person name="Iobst S."/>
            <person name="Hsiao J."/>
            <person name="de Vazeille A.R."/>
            <person name="Salzberg S.L."/>
            <person name="White O."/>
            <person name="Fraser C.M."/>
            <person name="Yu Y."/>
            <person name="Kim H."/>
            <person name="Rambo T."/>
            <person name="Currie J."/>
            <person name="Collura K."/>
            <person name="Kernodle-Thompson S."/>
            <person name="Wei F."/>
            <person name="Kudrna K."/>
            <person name="Ammiraju J.S.S."/>
            <person name="Luo M."/>
            <person name="Goicoechea J.L."/>
            <person name="Wing R.A."/>
            <person name="Henry D."/>
            <person name="Oates R."/>
            <person name="Palmer M."/>
            <person name="Pries G."/>
            <person name="Saski C."/>
            <person name="Simmons J."/>
            <person name="Soderlund C."/>
            <person name="Nelson W."/>
            <person name="de la Bastide M."/>
            <person name="Spiegel L."/>
            <person name="Nascimento L."/>
            <person name="Huang E."/>
            <person name="Preston R."/>
            <person name="Zutavern T."/>
            <person name="Palmer L."/>
            <person name="O'Shaughnessy A."/>
            <person name="Dike S."/>
            <person name="McCombie W.R."/>
            <person name="Minx P."/>
            <person name="Cordum H."/>
            <person name="Wilson R."/>
            <person name="Jin W."/>
            <person name="Lee H.R."/>
            <person name="Jiang J."/>
            <person name="Jackson S."/>
        </authorList>
    </citation>
    <scope>NUCLEOTIDE SEQUENCE [LARGE SCALE GENOMIC DNA]</scope>
    <source>
        <strain>cv. Nipponbare</strain>
    </source>
</reference>
<reference key="2">
    <citation type="journal article" date="2005" name="Nature">
        <title>The map-based sequence of the rice genome.</title>
        <authorList>
            <consortium name="International rice genome sequencing project (IRGSP)"/>
        </authorList>
    </citation>
    <scope>NUCLEOTIDE SEQUENCE [LARGE SCALE GENOMIC DNA]</scope>
    <source>
        <strain>cv. Nipponbare</strain>
    </source>
</reference>
<reference key="3">
    <citation type="journal article" date="2008" name="Nucleic Acids Res.">
        <title>The rice annotation project database (RAP-DB): 2008 update.</title>
        <authorList>
            <consortium name="The rice annotation project (RAP)"/>
        </authorList>
    </citation>
    <scope>GENOME REANNOTATION</scope>
    <source>
        <strain>cv. Nipponbare</strain>
    </source>
</reference>
<reference key="4">
    <citation type="journal article" date="2013" name="Rice">
        <title>Improvement of the Oryza sativa Nipponbare reference genome using next generation sequence and optical map data.</title>
        <authorList>
            <person name="Kawahara Y."/>
            <person name="de la Bastide M."/>
            <person name="Hamilton J.P."/>
            <person name="Kanamori H."/>
            <person name="McCombie W.R."/>
            <person name="Ouyang S."/>
            <person name="Schwartz D.C."/>
            <person name="Tanaka T."/>
            <person name="Wu J."/>
            <person name="Zhou S."/>
            <person name="Childs K.L."/>
            <person name="Davidson R.M."/>
            <person name="Lin H."/>
            <person name="Quesada-Ocampo L."/>
            <person name="Vaillancourt B."/>
            <person name="Sakai H."/>
            <person name="Lee S.S."/>
            <person name="Kim J."/>
            <person name="Numa H."/>
            <person name="Itoh T."/>
            <person name="Buell C.R."/>
            <person name="Matsumoto T."/>
        </authorList>
    </citation>
    <scope>GENOME REANNOTATION</scope>
    <source>
        <strain>cv. Nipponbare</strain>
    </source>
</reference>
<reference key="5">
    <citation type="journal article" date="2003" name="Science">
        <title>Collection, mapping, and annotation of over 28,000 cDNA clones from japonica rice.</title>
        <authorList>
            <consortium name="The rice full-length cDNA consortium"/>
        </authorList>
    </citation>
    <scope>NUCLEOTIDE SEQUENCE [LARGE SCALE MRNA]</scope>
    <source>
        <strain>cv. Nipponbare</strain>
    </source>
</reference>
<reference key="6">
    <citation type="journal article" date="2007" name="Plant Mol. Biol.">
        <title>Genome-wide identification and expression analysis of rice cell cycle genes.</title>
        <authorList>
            <person name="Guo J."/>
            <person name="Song J."/>
            <person name="Wang F."/>
            <person name="Zhang X.S."/>
        </authorList>
    </citation>
    <scope>INDUCTION</scope>
    <scope>GENE FAMILY</scope>
</reference>
<proteinExistence type="evidence at transcript level"/>
<evidence type="ECO:0000250" key="1"/>
<evidence type="ECO:0000255" key="2">
    <source>
        <dbReference type="PROSITE-ProRule" id="PRU00159"/>
    </source>
</evidence>
<evidence type="ECO:0000255" key="3">
    <source>
        <dbReference type="PROSITE-ProRule" id="PRU10027"/>
    </source>
</evidence>
<evidence type="ECO:0000269" key="4">
    <source>
    </source>
</evidence>
<evidence type="ECO:0000305" key="5"/>
<gene>
    <name type="primary">CDKF-3</name>
    <name type="ordered locus">Os03g0847600</name>
    <name type="ordered locus">LOC_Os03g63020</name>
    <name type="ORF">OSJNBb0043P23.8</name>
</gene>
<name>CDKF3_ORYSJ</name>
<sequence length="433" mass="49515">MERYKVIREIGDGTCGNVFRAYNTETNEIVAVKKMKRKFFQWEECISLREVKALQKLNHPNIVKLKEVTMENHELFFIFENMECNLYDVIRERQAAFSEEEIRNFMVQILQGLAYMHNNGYFHRDLKPENLLVTDGTVKIADFGLAREVSSSPPYTDYVSTRWYRAPEVLLQSSAYTPAIDMWAVGAILAELFTLSPLFPGGSETDQLYKICAVLGTPDHTVWPEGMNLPRSSSFNFFQIPPRNLWELIPNATLEAIDLIQQLCSWDPRRRPTAEQSLQHPFFNVGNWVPRPLHASHTKTIETRPNPRLELNLWDFGTEPEDNYLDLTLSLKPSFPGTDFSNNVPEHTKEEILLYPGFENPPVQSGFWPLVASDRPMGDVPAMSSWPQAYVVDGQATLPAVGFSGSPFGLSPLQPNLFENRSFATPIRQVNFF</sequence>
<feature type="chain" id="PRO_0000296108" description="Cyclin-dependent kinase F-3">
    <location>
        <begin position="1"/>
        <end position="433"/>
    </location>
</feature>
<feature type="domain" description="Protein kinase" evidence="2">
    <location>
        <begin position="4"/>
        <end position="283"/>
    </location>
</feature>
<feature type="active site" description="Proton acceptor" evidence="2 3">
    <location>
        <position position="125"/>
    </location>
</feature>
<feature type="binding site" evidence="2">
    <location>
        <begin position="10"/>
        <end position="18"/>
    </location>
    <ligand>
        <name>ATP</name>
        <dbReference type="ChEBI" id="CHEBI:30616"/>
    </ligand>
</feature>
<feature type="binding site" evidence="2">
    <location>
        <position position="33"/>
    </location>
    <ligand>
        <name>ATP</name>
        <dbReference type="ChEBI" id="CHEBI:30616"/>
    </ligand>
</feature>
<feature type="modified residue" description="Phosphoserine" evidence="1">
    <location>
        <position position="151"/>
    </location>
</feature>
<feature type="modified residue" description="Phosphothreonine" evidence="1">
    <location>
        <position position="156"/>
    </location>
</feature>
<feature type="sequence conflict" description="In Ref. 5; AK066947." evidence="5" ref="5">
    <original>G</original>
    <variation>S</variation>
    <location>
        <position position="120"/>
    </location>
</feature>
<protein>
    <recommendedName>
        <fullName>Cyclin-dependent kinase F-3</fullName>
        <shortName>CDKF;3</shortName>
        <ecNumber>2.7.11.22</ecNumber>
        <ecNumber>2.7.11.23</ecNumber>
    </recommendedName>
    <alternativeName>
        <fullName>Serine/threonine-protein kinase MHK-like protein 1</fullName>
    </alternativeName>
</protein>
<organism>
    <name type="scientific">Oryza sativa subsp. japonica</name>
    <name type="common">Rice</name>
    <dbReference type="NCBI Taxonomy" id="39947"/>
    <lineage>
        <taxon>Eukaryota</taxon>
        <taxon>Viridiplantae</taxon>
        <taxon>Streptophyta</taxon>
        <taxon>Embryophyta</taxon>
        <taxon>Tracheophyta</taxon>
        <taxon>Spermatophyta</taxon>
        <taxon>Magnoliopsida</taxon>
        <taxon>Liliopsida</taxon>
        <taxon>Poales</taxon>
        <taxon>Poaceae</taxon>
        <taxon>BOP clade</taxon>
        <taxon>Oryzoideae</taxon>
        <taxon>Oryzeae</taxon>
        <taxon>Oryzinae</taxon>
        <taxon>Oryza</taxon>
        <taxon>Oryza sativa</taxon>
    </lineage>
</organism>
<keyword id="KW-0067">ATP-binding</keyword>
<keyword id="KW-0418">Kinase</keyword>
<keyword id="KW-0547">Nucleotide-binding</keyword>
<keyword id="KW-0597">Phosphoprotein</keyword>
<keyword id="KW-1185">Reference proteome</keyword>
<keyword id="KW-0723">Serine/threonine-protein kinase</keyword>
<keyword id="KW-0808">Transferase</keyword>
<dbReference type="EC" id="2.7.11.22"/>
<dbReference type="EC" id="2.7.11.23"/>
<dbReference type="EMBL" id="AC099324">
    <property type="protein sequence ID" value="AAO73290.1"/>
    <property type="molecule type" value="Genomic_DNA"/>
</dbReference>
<dbReference type="EMBL" id="DP000009">
    <property type="protein sequence ID" value="ABF99883.1"/>
    <property type="molecule type" value="Genomic_DNA"/>
</dbReference>
<dbReference type="EMBL" id="AP008209">
    <property type="protein sequence ID" value="BAF13800.1"/>
    <property type="molecule type" value="Genomic_DNA"/>
</dbReference>
<dbReference type="EMBL" id="AP014959">
    <property type="protein sequence ID" value="BAS87350.1"/>
    <property type="molecule type" value="Genomic_DNA"/>
</dbReference>
<dbReference type="EMBL" id="AK066947">
    <property type="status" value="NOT_ANNOTATED_CDS"/>
    <property type="molecule type" value="mRNA"/>
</dbReference>
<dbReference type="EMBL" id="AK104847">
    <property type="protein sequence ID" value="BAG96993.1"/>
    <property type="molecule type" value="mRNA"/>
</dbReference>
<dbReference type="RefSeq" id="XP_015632872.1">
    <property type="nucleotide sequence ID" value="XM_015777386.1"/>
</dbReference>
<dbReference type="SMR" id="Q84SN3"/>
<dbReference type="FunCoup" id="Q84SN3">
    <property type="interactions" value="651"/>
</dbReference>
<dbReference type="STRING" id="39947.Q84SN3"/>
<dbReference type="PaxDb" id="39947-Q84SN3"/>
<dbReference type="EnsemblPlants" id="Os03t0847600-01">
    <property type="protein sequence ID" value="Os03t0847600-01"/>
    <property type="gene ID" value="Os03g0847600"/>
</dbReference>
<dbReference type="EnsemblPlants" id="Os03t0847600-02">
    <property type="protein sequence ID" value="Os03t0847600-02"/>
    <property type="gene ID" value="Os03g0847600"/>
</dbReference>
<dbReference type="Gramene" id="Os03t0847600-01">
    <property type="protein sequence ID" value="Os03t0847600-01"/>
    <property type="gene ID" value="Os03g0847600"/>
</dbReference>
<dbReference type="Gramene" id="Os03t0847600-02">
    <property type="protein sequence ID" value="Os03t0847600-02"/>
    <property type="gene ID" value="Os03g0847600"/>
</dbReference>
<dbReference type="KEGG" id="dosa:Os03g0847600"/>
<dbReference type="eggNOG" id="KOG0661">
    <property type="taxonomic scope" value="Eukaryota"/>
</dbReference>
<dbReference type="HOGENOM" id="CLU_000288_181_2_1"/>
<dbReference type="InParanoid" id="Q84SN3"/>
<dbReference type="OMA" id="LHSTHYN"/>
<dbReference type="OrthoDB" id="2158884at2759"/>
<dbReference type="Proteomes" id="UP000000763">
    <property type="component" value="Chromosome 3"/>
</dbReference>
<dbReference type="Proteomes" id="UP000059680">
    <property type="component" value="Chromosome 3"/>
</dbReference>
<dbReference type="GO" id="GO:0005737">
    <property type="term" value="C:cytoplasm"/>
    <property type="evidence" value="ECO:0000318"/>
    <property type="project" value="GO_Central"/>
</dbReference>
<dbReference type="GO" id="GO:0005634">
    <property type="term" value="C:nucleus"/>
    <property type="evidence" value="ECO:0000318"/>
    <property type="project" value="GO_Central"/>
</dbReference>
<dbReference type="GO" id="GO:0005524">
    <property type="term" value="F:ATP binding"/>
    <property type="evidence" value="ECO:0007669"/>
    <property type="project" value="UniProtKB-KW"/>
</dbReference>
<dbReference type="GO" id="GO:0004693">
    <property type="term" value="F:cyclin-dependent protein serine/threonine kinase activity"/>
    <property type="evidence" value="ECO:0007669"/>
    <property type="project" value="UniProtKB-EC"/>
</dbReference>
<dbReference type="GO" id="GO:0106310">
    <property type="term" value="F:protein serine kinase activity"/>
    <property type="evidence" value="ECO:0007669"/>
    <property type="project" value="RHEA"/>
</dbReference>
<dbReference type="GO" id="GO:0004674">
    <property type="term" value="F:protein serine/threonine kinase activity"/>
    <property type="evidence" value="ECO:0000318"/>
    <property type="project" value="GO_Central"/>
</dbReference>
<dbReference type="GO" id="GO:0008353">
    <property type="term" value="F:RNA polymerase II CTD heptapeptide repeat kinase activity"/>
    <property type="evidence" value="ECO:0007669"/>
    <property type="project" value="UniProtKB-EC"/>
</dbReference>
<dbReference type="GO" id="GO:0035556">
    <property type="term" value="P:intracellular signal transduction"/>
    <property type="evidence" value="ECO:0000318"/>
    <property type="project" value="GO_Central"/>
</dbReference>
<dbReference type="CDD" id="cd07830">
    <property type="entry name" value="STKc_MAK_like"/>
    <property type="match status" value="1"/>
</dbReference>
<dbReference type="FunFam" id="1.10.510.10:FF:000104">
    <property type="entry name" value="serine/threonine-protein kinase MAK isoform X1"/>
    <property type="match status" value="1"/>
</dbReference>
<dbReference type="FunFam" id="3.30.200.20:FF:000335">
    <property type="entry name" value="Serine/threonine-protein kinase MHK"/>
    <property type="match status" value="1"/>
</dbReference>
<dbReference type="Gene3D" id="3.30.200.20">
    <property type="entry name" value="Phosphorylase Kinase, domain 1"/>
    <property type="match status" value="1"/>
</dbReference>
<dbReference type="Gene3D" id="1.10.510.10">
    <property type="entry name" value="Transferase(Phosphotransferase) domain 1"/>
    <property type="match status" value="1"/>
</dbReference>
<dbReference type="InterPro" id="IPR011009">
    <property type="entry name" value="Kinase-like_dom_sf"/>
</dbReference>
<dbReference type="InterPro" id="IPR050117">
    <property type="entry name" value="MAP_kinase"/>
</dbReference>
<dbReference type="InterPro" id="IPR000719">
    <property type="entry name" value="Prot_kinase_dom"/>
</dbReference>
<dbReference type="InterPro" id="IPR008271">
    <property type="entry name" value="Ser/Thr_kinase_AS"/>
</dbReference>
<dbReference type="PANTHER" id="PTHR24055">
    <property type="entry name" value="MITOGEN-ACTIVATED PROTEIN KINASE"/>
    <property type="match status" value="1"/>
</dbReference>
<dbReference type="Pfam" id="PF00069">
    <property type="entry name" value="Pkinase"/>
    <property type="match status" value="1"/>
</dbReference>
<dbReference type="SMART" id="SM00220">
    <property type="entry name" value="S_TKc"/>
    <property type="match status" value="1"/>
</dbReference>
<dbReference type="SUPFAM" id="SSF56112">
    <property type="entry name" value="Protein kinase-like (PK-like)"/>
    <property type="match status" value="1"/>
</dbReference>
<dbReference type="PROSITE" id="PS50011">
    <property type="entry name" value="PROTEIN_KINASE_DOM"/>
    <property type="match status" value="1"/>
</dbReference>
<dbReference type="PROSITE" id="PS00108">
    <property type="entry name" value="PROTEIN_KINASE_ST"/>
    <property type="match status" value="1"/>
</dbReference>